<reference key="1">
    <citation type="journal article" date="1999" name="Proc. Natl. Acad. Sci. U.S.A.">
        <title>Cloning of chlorophyllase, the key enzyme in chlorophyll degradation: finding of a lipase motif and the induction by methyl jasmonate.</title>
        <authorList>
            <person name="Tsuchiya T."/>
            <person name="Ohta H."/>
            <person name="Okawa K."/>
            <person name="Iwamatsu A."/>
            <person name="Shimada H."/>
            <person name="Masuda T."/>
            <person name="Takamiya K."/>
        </authorList>
    </citation>
    <scope>NUCLEOTIDE SEQUENCE [MRNA]</scope>
    <scope>PROTEIN SEQUENCE OF 34-51; 156-166 AND 250-256</scope>
    <scope>FUNCTION</scope>
    <scope>CATALYTIC ACTIVITY</scope>
    <source>
        <tissue>Leaf</tissue>
    </source>
</reference>
<reference key="2">
    <citation type="journal article" date="2003" name="Plant Cell Physiol.">
        <title>Chlorophyllase as a serine hydrolase: identification of a putative catalytic triad.</title>
        <authorList>
            <person name="Tsuchiya T."/>
            <person name="Suzuki T."/>
            <person name="Yamada T."/>
            <person name="Shimada H."/>
            <person name="Masuda T."/>
            <person name="Ohta H."/>
            <person name="Takamiya K."/>
        </authorList>
    </citation>
    <scope>FUNCTION</scope>
    <scope>CATALYTIC ACTIVITY</scope>
    <scope>ACTIVITY REGULATION</scope>
    <scope>ACTIVE SITE</scope>
    <scope>MUTAGENESIS OF HIS-81; HIS-100; HIS-161; SER-162; SER-167; ASP-191; CYS-234; HIS-241; CYS-248; HIS-254; HIS-262; ASP-264 AND CYS-282</scope>
</reference>
<keyword id="KW-0881">Chlorophyll catabolism</keyword>
<keyword id="KW-0903">Direct protein sequencing</keyword>
<keyword id="KW-0325">Glycoprotein</keyword>
<keyword id="KW-0378">Hydrolase</keyword>
<keyword id="KW-0732">Signal</keyword>
<evidence type="ECO:0000250" key="1"/>
<evidence type="ECO:0000250" key="2">
    <source>
        <dbReference type="UniProtKB" id="Q948R1"/>
    </source>
</evidence>
<evidence type="ECO:0000255" key="3"/>
<evidence type="ECO:0000269" key="4">
    <source>
    </source>
</evidence>
<evidence type="ECO:0000269" key="5">
    <source>
    </source>
</evidence>
<evidence type="ECO:0000303" key="6">
    <source>
    </source>
</evidence>
<evidence type="ECO:0000305" key="7"/>
<evidence type="ECO:0000305" key="8">
    <source>
    </source>
</evidence>
<dbReference type="EC" id="3.1.1.14" evidence="5"/>
<dbReference type="EMBL" id="AB025025">
    <property type="protein sequence ID" value="BAA93635.1"/>
    <property type="molecule type" value="mRNA"/>
</dbReference>
<dbReference type="EMBL" id="AF134301">
    <property type="protein sequence ID" value="AAF27045.1"/>
    <property type="molecule type" value="mRNA"/>
</dbReference>
<dbReference type="SMR" id="Q9LE89"/>
<dbReference type="SwissLipids" id="SLP:000001500"/>
<dbReference type="ESTHER" id="cheal-CACLH">
    <property type="family name" value="Chlorophyllase_Plant"/>
</dbReference>
<dbReference type="GlyCosmos" id="Q9LE89">
    <property type="glycosylation" value="4 sites, No reported glycans"/>
</dbReference>
<dbReference type="KEGG" id="ag:AAF27045"/>
<dbReference type="BRENDA" id="3.1.1.14">
    <property type="organism ID" value="1304"/>
</dbReference>
<dbReference type="UniPathway" id="UPA00674"/>
<dbReference type="GO" id="GO:0047746">
    <property type="term" value="F:chlorophyllase activity"/>
    <property type="evidence" value="ECO:0000314"/>
    <property type="project" value="UniProtKB"/>
</dbReference>
<dbReference type="GO" id="GO:0015996">
    <property type="term" value="P:chlorophyll catabolic process"/>
    <property type="evidence" value="ECO:0000314"/>
    <property type="project" value="UniProtKB"/>
</dbReference>
<dbReference type="Gene3D" id="3.40.50.1820">
    <property type="entry name" value="alpha/beta hydrolase"/>
    <property type="match status" value="1"/>
</dbReference>
<dbReference type="InterPro" id="IPR029058">
    <property type="entry name" value="AB_hydrolase_fold"/>
</dbReference>
<dbReference type="InterPro" id="IPR048264">
    <property type="entry name" value="Chlorophyllase"/>
</dbReference>
<dbReference type="InterPro" id="IPR017395">
    <property type="entry name" value="Chlorophyllase-like"/>
</dbReference>
<dbReference type="PANTHER" id="PTHR33428:SF10">
    <property type="entry name" value="CHLOROPHYLLASE-1"/>
    <property type="match status" value="1"/>
</dbReference>
<dbReference type="PANTHER" id="PTHR33428">
    <property type="entry name" value="CHLOROPHYLLASE-2, CHLOROPLASTIC"/>
    <property type="match status" value="1"/>
</dbReference>
<dbReference type="Pfam" id="PF07224">
    <property type="entry name" value="Chlorophyllase"/>
    <property type="match status" value="1"/>
</dbReference>
<dbReference type="PIRSF" id="PIRSF038128">
    <property type="entry name" value="Chlorophyllase_chloroplast"/>
    <property type="match status" value="1"/>
</dbReference>
<dbReference type="SUPFAM" id="SSF53474">
    <property type="entry name" value="alpha/beta-Hydrolases"/>
    <property type="match status" value="1"/>
</dbReference>
<dbReference type="PROSITE" id="PS00120">
    <property type="entry name" value="LIPASE_SER"/>
    <property type="match status" value="1"/>
</dbReference>
<comment type="function">
    <text evidence="4 5">Catalyzes the hydrolysis of ester bond in chlorophyll to yield chlorophyllide and phytol.</text>
</comment>
<comment type="catalytic activity">
    <reaction evidence="5">
        <text>a chlorophyll + H2O = a chlorophyllide + phytol + H(+)</text>
        <dbReference type="Rhea" id="RHEA:19605"/>
        <dbReference type="ChEBI" id="CHEBI:15377"/>
        <dbReference type="ChEBI" id="CHEBI:15378"/>
        <dbReference type="ChEBI" id="CHEBI:17327"/>
        <dbReference type="ChEBI" id="CHEBI:139291"/>
        <dbReference type="ChEBI" id="CHEBI:139292"/>
        <dbReference type="EC" id="3.1.1.14"/>
    </reaction>
    <physiologicalReaction direction="left-to-right" evidence="5">
        <dbReference type="Rhea" id="RHEA:19606"/>
    </physiologicalReaction>
</comment>
<comment type="catalytic activity">
    <reaction evidence="4">
        <text>chlorophyll a + H2O = phytol + chlorophyllide a + H(+)</text>
        <dbReference type="Rhea" id="RHEA:38011"/>
        <dbReference type="ChEBI" id="CHEBI:15377"/>
        <dbReference type="ChEBI" id="CHEBI:15378"/>
        <dbReference type="ChEBI" id="CHEBI:17327"/>
        <dbReference type="ChEBI" id="CHEBI:58416"/>
        <dbReference type="ChEBI" id="CHEBI:83348"/>
    </reaction>
    <physiologicalReaction direction="left-to-right" evidence="4">
        <dbReference type="Rhea" id="RHEA:38012"/>
    </physiologicalReaction>
</comment>
<comment type="activity regulation">
    <text evidence="5">Inhibited by diisopropyl fluorophosphate (DFP), phenylmethanesulfonyl fluoride (PMSF) or p-chloromercuribenzoic acid (PCMB), but not by N-ethylmaleimide (NEM) or iodoacetamide.</text>
</comment>
<comment type="pathway">
    <text>Porphyrin-containing compound metabolism; chlorophyll degradation.</text>
</comment>
<comment type="miscellaneous">
    <text>It has been proposed that CaCLH0 is transported to vacuole via the endoplasmic reticulum where it might be glycosylated.</text>
</comment>
<comment type="similarity">
    <text evidence="7">Belongs to the AB hydrolase superfamily. Lipase family.</text>
</comment>
<feature type="signal peptide" evidence="3">
    <location>
        <begin position="1"/>
        <end position="19"/>
    </location>
</feature>
<feature type="propeptide" id="PRO_0000017837" evidence="1">
    <location>
        <begin position="20"/>
        <end position="30"/>
    </location>
</feature>
<feature type="chain" id="PRO_0000017838" description="Chlorophyllase type 0">
    <location>
        <begin position="31"/>
        <end position="347"/>
    </location>
</feature>
<feature type="short sequence motif" description="GXSXG" evidence="2">
    <location>
        <begin position="160"/>
        <end position="164"/>
    </location>
</feature>
<feature type="active site" description="Nucleophile" evidence="8">
    <location>
        <position position="162"/>
    </location>
</feature>
<feature type="active site" description="Charge relay system" evidence="8">
    <location>
        <position position="191"/>
    </location>
</feature>
<feature type="active site" description="Charge relay system" evidence="8">
    <location>
        <position position="262"/>
    </location>
</feature>
<feature type="glycosylation site" description="N-linked (GlcNAc...) asparagine" evidence="3">
    <location>
        <position position="215"/>
    </location>
</feature>
<feature type="glycosylation site" description="N-linked (GlcNAc...) asparagine" evidence="3">
    <location>
        <position position="229"/>
    </location>
</feature>
<feature type="glycosylation site" description="N-linked (GlcNAc...) asparagine" evidence="3">
    <location>
        <position position="251"/>
    </location>
</feature>
<feature type="glycosylation site" description="N-linked (GlcNAc...) asparagine" evidence="3">
    <location>
        <position position="321"/>
    </location>
</feature>
<feature type="mutagenesis site" description="Reduction of activity." evidence="5">
    <original>H</original>
    <variation>A</variation>
    <location>
        <position position="81"/>
    </location>
</feature>
<feature type="mutagenesis site" description="Severe loss of activity." evidence="5">
    <original>H</original>
    <variation>A</variation>
    <location>
        <position position="100"/>
    </location>
</feature>
<feature type="mutagenesis site" description="Total loss of activity." evidence="5">
    <original>H</original>
    <variation>A</variation>
    <location>
        <position position="161"/>
    </location>
</feature>
<feature type="mutagenesis site" description="Total loss of activity." evidence="5">
    <original>S</original>
    <variation>A</variation>
    <location>
        <position position="162"/>
    </location>
</feature>
<feature type="mutagenesis site" description="Slight reduction of activity." evidence="5">
    <original>S</original>
    <variation>A</variation>
    <location>
        <position position="167"/>
    </location>
</feature>
<feature type="mutagenesis site" description="Total loss of activity." evidence="5">
    <original>D</original>
    <variation>N</variation>
    <location>
        <position position="191"/>
    </location>
</feature>
<feature type="mutagenesis site" description="Severe loss of activity." evidence="5">
    <original>C</original>
    <variation>A</variation>
    <location>
        <position position="234"/>
    </location>
</feature>
<feature type="mutagenesis site" description="Reduction of activity." evidence="5">
    <original>H</original>
    <variation>A</variation>
    <location>
        <position position="241"/>
    </location>
</feature>
<feature type="mutagenesis site" description="Reduction of activity." evidence="5">
    <original>C</original>
    <variation>A</variation>
    <location>
        <position position="248"/>
    </location>
</feature>
<feature type="mutagenesis site" description="Total loss of activity." evidence="5">
    <original>H</original>
    <variation>A</variation>
    <location>
        <position position="254"/>
    </location>
</feature>
<feature type="mutagenesis site" description="Reduction of activity." evidence="5">
    <original>H</original>
    <variation>Y</variation>
    <location>
        <position position="254"/>
    </location>
</feature>
<feature type="mutagenesis site" description="Total loss of activity." evidence="5">
    <original>H</original>
    <variation>A</variation>
    <variation>Y</variation>
    <location>
        <position position="262"/>
    </location>
</feature>
<feature type="mutagenesis site" description="Severe loss of activity." evidence="5">
    <original>D</original>
    <variation>N</variation>
    <location>
        <position position="264"/>
    </location>
</feature>
<feature type="mutagenesis site" description="Severe loss of activity." evidence="5">
    <original>C</original>
    <variation>A</variation>
    <location>
        <position position="282"/>
    </location>
</feature>
<accession>Q9LE89</accession>
<sequence>MAKLLLLIFGVFIFVNSQAQTFPTILEKHNSEKITDVFHKGNFQVTNNPIRVKRYEFSAPEPLIIISPKEAGVYPVLLFIHGTMLSNEDYSLFFNYIASHGFIVVAPKLFRLFPPKLPSQQDEIDMAASVANWMPLYLQVVLQRYVTGVEGDLEKLAISGHSRGGKSAFALALGFSNIKLDVTFSALIGVDPVAGRSVDDRTLPHVLTYKPNSFNLSIPVTVIGSGLGNHTISCAPNHVSHQQFYDECKENSSHFVITKYGHMDMLNEFRLSPIAVTMSLMCAQSFRPKATMRRTLGGIMVAFLNAYFRDDGRQYYAIIANRSLAPTNLFAEKKGFNFGFATTYAQL</sequence>
<protein>
    <recommendedName>
        <fullName evidence="6">Chlorophyllase type 0</fullName>
        <ecNumber evidence="5">3.1.1.14</ecNumber>
    </recommendedName>
    <alternativeName>
        <fullName evidence="7">CaCLH0</fullName>
    </alternativeName>
    <alternativeName>
        <fullName evidence="7">Chlorophyll-chlorophyllido hydrolase 0</fullName>
        <shortName evidence="7">Chlase 0</shortName>
    </alternativeName>
</protein>
<name>CLH0_CHEAL</name>
<gene>
    <name evidence="6" type="primary">CACLH</name>
</gene>
<organism>
    <name type="scientific">Chenopodium album</name>
    <name type="common">Fat hen</name>
    <dbReference type="NCBI Taxonomy" id="3559"/>
    <lineage>
        <taxon>Eukaryota</taxon>
        <taxon>Viridiplantae</taxon>
        <taxon>Streptophyta</taxon>
        <taxon>Embryophyta</taxon>
        <taxon>Tracheophyta</taxon>
        <taxon>Spermatophyta</taxon>
        <taxon>Magnoliopsida</taxon>
        <taxon>eudicotyledons</taxon>
        <taxon>Gunneridae</taxon>
        <taxon>Pentapetalae</taxon>
        <taxon>Caryophyllales</taxon>
        <taxon>Chenopodiaceae</taxon>
        <taxon>Chenopodioideae</taxon>
        <taxon>Atripliceae</taxon>
        <taxon>Chenopodium</taxon>
    </lineage>
</organism>
<proteinExistence type="evidence at protein level"/>